<comment type="function">
    <text evidence="1">Small subunit of the arginine-specific carbamoyl phosphate synthase (CPSase). CPSase catalyzes the formation of carbamoyl phosphate from the ammonia moiety of glutamine, carbonate, and phosphate donated by ATP, the first step of the arginine biosynthetic pathway. The small subunit (glutamine amidotransferase) binds and cleaves glutamine to supply the large subunit with the substrate ammonia.</text>
</comment>
<comment type="catalytic activity">
    <reaction evidence="1">
        <text>hydrogencarbonate + L-glutamine + 2 ATP + H2O = carbamoyl phosphate + L-glutamate + 2 ADP + phosphate + 2 H(+)</text>
        <dbReference type="Rhea" id="RHEA:18633"/>
        <dbReference type="ChEBI" id="CHEBI:15377"/>
        <dbReference type="ChEBI" id="CHEBI:15378"/>
        <dbReference type="ChEBI" id="CHEBI:17544"/>
        <dbReference type="ChEBI" id="CHEBI:29985"/>
        <dbReference type="ChEBI" id="CHEBI:30616"/>
        <dbReference type="ChEBI" id="CHEBI:43474"/>
        <dbReference type="ChEBI" id="CHEBI:58228"/>
        <dbReference type="ChEBI" id="CHEBI:58359"/>
        <dbReference type="ChEBI" id="CHEBI:456216"/>
        <dbReference type="EC" id="6.3.5.5"/>
    </reaction>
</comment>
<comment type="catalytic activity">
    <molecule>Carbamoyl phosphate synthase arginine-specific small chain</molecule>
    <reaction evidence="1">
        <text>L-glutamine + H2O = L-glutamate + NH4(+)</text>
        <dbReference type="Rhea" id="RHEA:15889"/>
        <dbReference type="ChEBI" id="CHEBI:15377"/>
        <dbReference type="ChEBI" id="CHEBI:28938"/>
        <dbReference type="ChEBI" id="CHEBI:29985"/>
        <dbReference type="ChEBI" id="CHEBI:58359"/>
    </reaction>
</comment>
<comment type="pathway">
    <text evidence="1">Amino-acid biosynthesis; L-arginine biosynthesis; carbamoyl phosphate from bicarbonate: step 1/1.</text>
</comment>
<comment type="subunit">
    <text evidence="1">Heterodimer composed of 2 chains; the small (or glutamine) chain promotes the hydrolysis of glutamine to ammonia, which is used by the large (or ammonia) chain to synthesize carbamoyl phosphate.</text>
</comment>
<comment type="subcellular location">
    <subcellularLocation>
        <location evidence="1">Mitochondrion matrix</location>
    </subcellularLocation>
</comment>
<comment type="similarity">
    <text evidence="4">Belongs to the CarA family.</text>
</comment>
<keyword id="KW-0028">Amino-acid biosynthesis</keyword>
<keyword id="KW-0055">Arginine biosynthesis</keyword>
<keyword id="KW-0067">ATP-binding</keyword>
<keyword id="KW-0315">Glutamine amidotransferase</keyword>
<keyword id="KW-0436">Ligase</keyword>
<keyword id="KW-0496">Mitochondrion</keyword>
<keyword id="KW-0547">Nucleotide-binding</keyword>
<keyword id="KW-0809">Transit peptide</keyword>
<proteinExistence type="inferred from homology"/>
<name>CARA_PHANO</name>
<gene>
    <name type="primary">CPA1</name>
    <name type="ORF">SNOG_12987</name>
</gene>
<accession>Q0U5H7</accession>
<feature type="transit peptide" description="Mitochondrion" evidence="2">
    <location>
        <begin position="1"/>
        <end position="24"/>
    </location>
</feature>
<feature type="chain" id="PRO_0000290598" description="Carbamoyl phosphate synthase arginine-specific small chain" evidence="2">
    <location>
        <begin position="25"/>
        <end position="476"/>
    </location>
</feature>
<feature type="domain" description="Glutamine amidotransferase type-1" evidence="3">
    <location>
        <begin position="228"/>
        <end position="415"/>
    </location>
</feature>
<feature type="active site" description="Nucleophile" evidence="3">
    <location>
        <position position="304"/>
    </location>
</feature>
<feature type="active site" evidence="3">
    <location>
        <position position="388"/>
    </location>
</feature>
<feature type="active site" evidence="3">
    <location>
        <position position="390"/>
    </location>
</feature>
<protein>
    <recommendedName>
        <fullName>Carbamoyl phosphate synthase arginine-specific small chain</fullName>
        <shortName>CPS</shortName>
        <shortName>CPSase</shortName>
        <ecNumber evidence="1">6.3.5.5</ecNumber>
    </recommendedName>
    <alternativeName>
        <fullName>Arginine-specific carbamoyl phosphate synthetase, glutamine chain</fullName>
    </alternativeName>
    <alternativeName>
        <fullName>Glutamine-dependent carbamoyl phosphate synthetase</fullName>
    </alternativeName>
</protein>
<reference key="1">
    <citation type="journal article" date="2007" name="Plant Cell">
        <title>Dothideomycete-plant interactions illuminated by genome sequencing and EST analysis of the wheat pathogen Stagonospora nodorum.</title>
        <authorList>
            <person name="Hane J.K."/>
            <person name="Lowe R.G.T."/>
            <person name="Solomon P.S."/>
            <person name="Tan K.-C."/>
            <person name="Schoch C.L."/>
            <person name="Spatafora J.W."/>
            <person name="Crous P.W."/>
            <person name="Kodira C.D."/>
            <person name="Birren B.W."/>
            <person name="Galagan J.E."/>
            <person name="Torriani S.F.F."/>
            <person name="McDonald B.A."/>
            <person name="Oliver R.P."/>
        </authorList>
    </citation>
    <scope>NUCLEOTIDE SEQUENCE [LARGE SCALE GENOMIC DNA]</scope>
    <source>
        <strain>SN15 / ATCC MYA-4574 / FGSC 10173</strain>
    </source>
</reference>
<organism>
    <name type="scientific">Phaeosphaeria nodorum (strain SN15 / ATCC MYA-4574 / FGSC 10173)</name>
    <name type="common">Glume blotch fungus</name>
    <name type="synonym">Parastagonospora nodorum</name>
    <dbReference type="NCBI Taxonomy" id="321614"/>
    <lineage>
        <taxon>Eukaryota</taxon>
        <taxon>Fungi</taxon>
        <taxon>Dikarya</taxon>
        <taxon>Ascomycota</taxon>
        <taxon>Pezizomycotina</taxon>
        <taxon>Dothideomycetes</taxon>
        <taxon>Pleosporomycetidae</taxon>
        <taxon>Pleosporales</taxon>
        <taxon>Pleosporineae</taxon>
        <taxon>Phaeosphaeriaceae</taxon>
        <taxon>Parastagonospora</taxon>
    </lineage>
</organism>
<sequence length="476" mass="52138">MFSHLLKPAARSAGLLGHVNRRYLATVHTNTAREIPKPSRKPTPISLENATFTIKNGPIFSGKSFGAKANISGEAVFTTSLVGYPESMTDPSYRGQILVFTQPLIGNYGVPSSARDEHGLLRYFESPNIQASGIVVQDYALKHSHWTAVESLAQWCAREGVPAISGVDTREVVTYLREQGSSLARITVGEEYDADEDEAYIDPEAINLVRRVSTKAPFHVSSSLGDMHVALIDCGVKENILRSLVSRGASVTCFPFDYPIHKVAHHFDGVFISNGPGDPTHCTSTVYNLRKLFETSQLPVMGICMGHQLIALAAGAKTIKLKYGNRAHNIPALDLTTGKCHITSQNHGYAVDPTTLTSEWKEYFTNLNDQSNEGLIHASRPIFSAQFHPEAKGGPMDSSYLFDKYIQNVQRYKDHQSSFSEKSNKPSPLLVDLLSKERVGVHPAQPDFEMHVPGRVEQVDVGGPVAPPYQPITAAA</sequence>
<dbReference type="EC" id="6.3.5.5" evidence="1"/>
<dbReference type="EMBL" id="CH445348">
    <property type="protein sequence ID" value="EAT79787.1"/>
    <property type="molecule type" value="Genomic_DNA"/>
</dbReference>
<dbReference type="RefSeq" id="XP_001803201.1">
    <property type="nucleotide sequence ID" value="XM_001803149.1"/>
</dbReference>
<dbReference type="SMR" id="Q0U5H7"/>
<dbReference type="FunCoup" id="Q0U5H7">
    <property type="interactions" value="328"/>
</dbReference>
<dbReference type="STRING" id="321614.Q0U5H7"/>
<dbReference type="EnsemblFungi" id="SNOT_12987">
    <property type="protein sequence ID" value="SNOT_12987"/>
    <property type="gene ID" value="SNOG_12987"/>
</dbReference>
<dbReference type="GeneID" id="5980114"/>
<dbReference type="KEGG" id="pno:SNOG_12987"/>
<dbReference type="VEuPathDB" id="FungiDB:JI435_129870"/>
<dbReference type="eggNOG" id="KOG0370">
    <property type="taxonomic scope" value="Eukaryota"/>
</dbReference>
<dbReference type="HOGENOM" id="CLU_035901_1_0_1"/>
<dbReference type="InParanoid" id="Q0U5H7"/>
<dbReference type="OMA" id="CFSVQYH"/>
<dbReference type="OrthoDB" id="434at2759"/>
<dbReference type="UniPathway" id="UPA00068">
    <property type="reaction ID" value="UER00171"/>
</dbReference>
<dbReference type="Proteomes" id="UP000001055">
    <property type="component" value="Unassembled WGS sequence"/>
</dbReference>
<dbReference type="GO" id="GO:0005951">
    <property type="term" value="C:carbamoyl-phosphate synthase complex"/>
    <property type="evidence" value="ECO:0000318"/>
    <property type="project" value="GO_Central"/>
</dbReference>
<dbReference type="GO" id="GO:0005737">
    <property type="term" value="C:cytoplasm"/>
    <property type="evidence" value="ECO:0000318"/>
    <property type="project" value="GO_Central"/>
</dbReference>
<dbReference type="GO" id="GO:0005759">
    <property type="term" value="C:mitochondrial matrix"/>
    <property type="evidence" value="ECO:0007669"/>
    <property type="project" value="UniProtKB-SubCell"/>
</dbReference>
<dbReference type="GO" id="GO:0005524">
    <property type="term" value="F:ATP binding"/>
    <property type="evidence" value="ECO:0007669"/>
    <property type="project" value="UniProtKB-KW"/>
</dbReference>
<dbReference type="GO" id="GO:0004088">
    <property type="term" value="F:carbamoyl-phosphate synthase (glutamine-hydrolyzing) activity"/>
    <property type="evidence" value="ECO:0007669"/>
    <property type="project" value="UniProtKB-EC"/>
</dbReference>
<dbReference type="GO" id="GO:0004359">
    <property type="term" value="F:glutaminase activity"/>
    <property type="evidence" value="ECO:0007669"/>
    <property type="project" value="RHEA"/>
</dbReference>
<dbReference type="GO" id="GO:0006207">
    <property type="term" value="P:'de novo' pyrimidine nucleobase biosynthetic process"/>
    <property type="evidence" value="ECO:0007669"/>
    <property type="project" value="InterPro"/>
</dbReference>
<dbReference type="GO" id="GO:0006541">
    <property type="term" value="P:glutamine metabolic process"/>
    <property type="evidence" value="ECO:0007669"/>
    <property type="project" value="InterPro"/>
</dbReference>
<dbReference type="GO" id="GO:0006526">
    <property type="term" value="P:L-arginine biosynthetic process"/>
    <property type="evidence" value="ECO:0000318"/>
    <property type="project" value="GO_Central"/>
</dbReference>
<dbReference type="GO" id="GO:0006221">
    <property type="term" value="P:pyrimidine nucleotide biosynthetic process"/>
    <property type="evidence" value="ECO:0007669"/>
    <property type="project" value="EnsemblFungi"/>
</dbReference>
<dbReference type="CDD" id="cd01744">
    <property type="entry name" value="GATase1_CPSase"/>
    <property type="match status" value="1"/>
</dbReference>
<dbReference type="FunFam" id="3.40.50.880:FF:000016">
    <property type="entry name" value="Carbamoyl-phosphate synthase arginine-specific small chain"/>
    <property type="match status" value="1"/>
</dbReference>
<dbReference type="FunFam" id="3.50.30.20:FF:000003">
    <property type="entry name" value="Carbamoyl-phosphate synthase arginine-specific small chain"/>
    <property type="match status" value="1"/>
</dbReference>
<dbReference type="Gene3D" id="3.40.50.880">
    <property type="match status" value="1"/>
</dbReference>
<dbReference type="Gene3D" id="3.50.30.20">
    <property type="entry name" value="Carbamoyl-phosphate synthase small subunit, N-terminal domain"/>
    <property type="match status" value="1"/>
</dbReference>
<dbReference type="HAMAP" id="MF_01209">
    <property type="entry name" value="CPSase_S_chain"/>
    <property type="match status" value="1"/>
</dbReference>
<dbReference type="InterPro" id="IPR006274">
    <property type="entry name" value="CarbamoylP_synth_ssu"/>
</dbReference>
<dbReference type="InterPro" id="IPR002474">
    <property type="entry name" value="CarbamoylP_synth_ssu_N"/>
</dbReference>
<dbReference type="InterPro" id="IPR036480">
    <property type="entry name" value="CarbP_synth_ssu_N_sf"/>
</dbReference>
<dbReference type="InterPro" id="IPR029062">
    <property type="entry name" value="Class_I_gatase-like"/>
</dbReference>
<dbReference type="InterPro" id="IPR035686">
    <property type="entry name" value="CPSase_GATase1"/>
</dbReference>
<dbReference type="InterPro" id="IPR017926">
    <property type="entry name" value="GATASE"/>
</dbReference>
<dbReference type="NCBIfam" id="TIGR01368">
    <property type="entry name" value="CPSaseIIsmall"/>
    <property type="match status" value="1"/>
</dbReference>
<dbReference type="NCBIfam" id="NF009475">
    <property type="entry name" value="PRK12838.1"/>
    <property type="match status" value="1"/>
</dbReference>
<dbReference type="PANTHER" id="PTHR11405:SF4">
    <property type="entry name" value="CARBAMOYL-PHOSPHATE SYNTHASE ARGININE-SPECIFIC SMALL CHAIN"/>
    <property type="match status" value="1"/>
</dbReference>
<dbReference type="PANTHER" id="PTHR11405">
    <property type="entry name" value="CARBAMOYLTRANSFERASE FAMILY MEMBER"/>
    <property type="match status" value="1"/>
</dbReference>
<dbReference type="Pfam" id="PF00988">
    <property type="entry name" value="CPSase_sm_chain"/>
    <property type="match status" value="1"/>
</dbReference>
<dbReference type="Pfam" id="PF00117">
    <property type="entry name" value="GATase"/>
    <property type="match status" value="1"/>
</dbReference>
<dbReference type="PRINTS" id="PR00097">
    <property type="entry name" value="ANTSNTHASEII"/>
</dbReference>
<dbReference type="PRINTS" id="PR00099">
    <property type="entry name" value="CPSGATASE"/>
</dbReference>
<dbReference type="PRINTS" id="PR00096">
    <property type="entry name" value="GATASE"/>
</dbReference>
<dbReference type="SMART" id="SM01097">
    <property type="entry name" value="CPSase_sm_chain"/>
    <property type="match status" value="1"/>
</dbReference>
<dbReference type="SUPFAM" id="SSF52021">
    <property type="entry name" value="Carbamoyl phosphate synthetase, small subunit N-terminal domain"/>
    <property type="match status" value="1"/>
</dbReference>
<dbReference type="SUPFAM" id="SSF52317">
    <property type="entry name" value="Class I glutamine amidotransferase-like"/>
    <property type="match status" value="1"/>
</dbReference>
<dbReference type="PROSITE" id="PS51273">
    <property type="entry name" value="GATASE_TYPE_1"/>
    <property type="match status" value="1"/>
</dbReference>
<evidence type="ECO:0000250" key="1">
    <source>
        <dbReference type="UniProtKB" id="P22572"/>
    </source>
</evidence>
<evidence type="ECO:0000255" key="2"/>
<evidence type="ECO:0000255" key="3">
    <source>
        <dbReference type="PROSITE-ProRule" id="PRU00605"/>
    </source>
</evidence>
<evidence type="ECO:0000305" key="4"/>